<proteinExistence type="evidence at protein level"/>
<gene>
    <name type="primary">SAP1</name>
</gene>
<name>RIP1_SAPOF</name>
<evidence type="ECO:0000250" key="1"/>
<evidence type="ECO:0000305" key="2"/>
<reference key="1">
    <citation type="journal article" date="1989" name="Int. J. Pept. Protein Res.">
        <title>N-terminal sequence of some ribosome-inactivating proteins.</title>
        <authorList>
            <person name="Montecucchi P.-C."/>
            <person name="Lazzarini A.M."/>
            <person name="Barbieri L."/>
            <person name="Stirpe F."/>
            <person name="Soria M."/>
            <person name="Lappi D."/>
        </authorList>
    </citation>
    <scope>PROTEIN SEQUENCE</scope>
    <source>
        <tissue>Leaf</tissue>
    </source>
</reference>
<protein>
    <recommendedName>
        <fullName>Ribosome-inactivating protein saporin-1</fullName>
        <shortName>SAP-1</shortName>
        <ecNumber>3.2.2.22</ecNumber>
    </recommendedName>
    <alternativeName>
        <fullName>SO-4</fullName>
    </alternativeName>
    <alternativeName>
        <fullName>rRNA N-glycosidase</fullName>
    </alternativeName>
</protein>
<accession>P98185</accession>
<feature type="chain" id="PRO_0000221411" description="Ribosome-inactivating protein saporin-1">
    <location>
        <begin position="1"/>
        <end position="40" status="greater than"/>
    </location>
</feature>
<feature type="non-terminal residue">
    <location>
        <position position="40"/>
    </location>
</feature>
<keyword id="KW-0903">Direct protein sequencing</keyword>
<keyword id="KW-0378">Hydrolase</keyword>
<keyword id="KW-0611">Plant defense</keyword>
<keyword id="KW-0652">Protein synthesis inhibitor</keyword>
<keyword id="KW-0800">Toxin</keyword>
<sequence>VIIYELNLQGTTKAQYSTILKQLRDDIKDPNLXYGXXDYS</sequence>
<comment type="function">
    <text evidence="1">Ribosome-inactivating protein of type 1, inhibits protein synthesis in animal cells.</text>
</comment>
<comment type="catalytic activity">
    <reaction>
        <text>Endohydrolysis of the N-glycosidic bond at one specific adenosine on the 28S rRNA.</text>
        <dbReference type="EC" id="3.2.2.22"/>
    </reaction>
</comment>
<comment type="similarity">
    <text evidence="2">Belongs to the ribosome-inactivating protein family. Type 1 RIP subfamily.</text>
</comment>
<dbReference type="EC" id="3.2.2.22"/>
<dbReference type="PIR" id="S16331">
    <property type="entry name" value="S16331"/>
</dbReference>
<dbReference type="Allergome" id="2805">
    <property type="allergen name" value="Sap o RIP"/>
</dbReference>
<dbReference type="GO" id="GO:0030598">
    <property type="term" value="F:rRNA N-glycosylase activity"/>
    <property type="evidence" value="ECO:0007669"/>
    <property type="project" value="UniProtKB-EC"/>
</dbReference>
<dbReference type="GO" id="GO:0090729">
    <property type="term" value="F:toxin activity"/>
    <property type="evidence" value="ECO:0007669"/>
    <property type="project" value="UniProtKB-KW"/>
</dbReference>
<dbReference type="GO" id="GO:0006952">
    <property type="term" value="P:defense response"/>
    <property type="evidence" value="ECO:0007669"/>
    <property type="project" value="UniProtKB-KW"/>
</dbReference>
<dbReference type="GO" id="GO:0017148">
    <property type="term" value="P:negative regulation of translation"/>
    <property type="evidence" value="ECO:0007669"/>
    <property type="project" value="UniProtKB-KW"/>
</dbReference>
<dbReference type="InterPro" id="IPR036041">
    <property type="entry name" value="Ribosome-inact_prot_sf"/>
</dbReference>
<dbReference type="SUPFAM" id="SSF56371">
    <property type="entry name" value="Ribosome inactivating proteins (RIP)"/>
    <property type="match status" value="1"/>
</dbReference>
<organism>
    <name type="scientific">Saponaria officinalis</name>
    <name type="common">Common soapwort</name>
    <name type="synonym">Lychnis saponaria</name>
    <dbReference type="NCBI Taxonomy" id="3572"/>
    <lineage>
        <taxon>Eukaryota</taxon>
        <taxon>Viridiplantae</taxon>
        <taxon>Streptophyta</taxon>
        <taxon>Embryophyta</taxon>
        <taxon>Tracheophyta</taxon>
        <taxon>Spermatophyta</taxon>
        <taxon>Magnoliopsida</taxon>
        <taxon>eudicotyledons</taxon>
        <taxon>Gunneridae</taxon>
        <taxon>Pentapetalae</taxon>
        <taxon>Caryophyllales</taxon>
        <taxon>Caryophyllaceae</taxon>
        <taxon>Caryophylleae</taxon>
        <taxon>Saponaria</taxon>
    </lineage>
</organism>